<keyword id="KW-0217">Developmental protein</keyword>
<keyword id="KW-0238">DNA-binding</keyword>
<keyword id="KW-0371">Homeobox</keyword>
<keyword id="KW-0539">Nucleus</keyword>
<keyword id="KW-1185">Reference proteome</keyword>
<keyword id="KW-0804">Transcription</keyword>
<keyword id="KW-0805">Transcription regulation</keyword>
<proteinExistence type="evidence at transcript level"/>
<accession>P50901</accession>
<name>HOX3_BRAFL</name>
<sequence length="411" mass="44005">MQKSPYYETTSQQLYNGYSYSNGERFGYEGSGGGGGGGSYGAEVTQDFGPSCSVRKPGSTTGGGTGNVSPTCMKTNPADNNHGSAPQSNASILANTKIYPWMKESRQNSKQRQQPNLSVGTTEPGESPGLGGAAGKRARTAYTSAQLVELEKEFHFNRYLCRPRRVEMAAMLNLTERQIKIWFQNRRMKYKKEQKVKGGGSGGGSGGMNSPSPPATTTPPGINPGPLPHPTTQPSLSQSNNMSNHMSMMGSLQQTQPAYSQYPPPHLNHSLPHQAPPHSVGLTMSGPVSPQCYQSNHSPCPPSSAPHPVPMGNHVPHPRQGPPHMTNGLPASPLEVVSQRQYTPPAPGPSPTGPGPGHHGLTNSYPECPPHHTELPHHQYSTPMSVVNMNYCVNVQTQGNRLNSAPKLTHL</sequence>
<protein>
    <recommendedName>
        <fullName>Homeobox protein HOX3</fullName>
    </recommendedName>
</protein>
<evidence type="ECO:0000255" key="1">
    <source>
        <dbReference type="PROSITE-ProRule" id="PRU00108"/>
    </source>
</evidence>
<evidence type="ECO:0000256" key="2">
    <source>
        <dbReference type="SAM" id="MobiDB-lite"/>
    </source>
</evidence>
<evidence type="ECO:0000305" key="3"/>
<reference key="1">
    <citation type="journal article" date="1992" name="Development">
        <title>An amphioxus homeobox gene: sequence conservation, spatial expression during development and insights into vertebrate evolution.</title>
        <authorList>
            <person name="Holland P.W."/>
            <person name="Holland L.Z."/>
            <person name="Williams N.A."/>
            <person name="Holland N.D."/>
        </authorList>
    </citation>
    <scope>NUCLEOTIDE SEQUENCE [GENOMIC DNA]</scope>
</reference>
<organism>
    <name type="scientific">Branchiostoma floridae</name>
    <name type="common">Florida lancelet</name>
    <name type="synonym">Amphioxus</name>
    <dbReference type="NCBI Taxonomy" id="7739"/>
    <lineage>
        <taxon>Eukaryota</taxon>
        <taxon>Metazoa</taxon>
        <taxon>Chordata</taxon>
        <taxon>Cephalochordata</taxon>
        <taxon>Leptocardii</taxon>
        <taxon>Amphioxiformes</taxon>
        <taxon>Branchiostomatidae</taxon>
        <taxon>Branchiostoma</taxon>
    </lineage>
</organism>
<feature type="chain" id="PRO_0000200274" description="Homeobox protein HOX3">
    <location>
        <begin position="1"/>
        <end position="411"/>
    </location>
</feature>
<feature type="DNA-binding region" description="Homeobox" evidence="1">
    <location>
        <begin position="135"/>
        <end position="194"/>
    </location>
</feature>
<feature type="region of interest" description="Disordered" evidence="2">
    <location>
        <begin position="51"/>
        <end position="90"/>
    </location>
</feature>
<feature type="region of interest" description="Disordered" evidence="2">
    <location>
        <begin position="104"/>
        <end position="138"/>
    </location>
</feature>
<feature type="region of interest" description="Disordered" evidence="2">
    <location>
        <begin position="192"/>
        <end position="377"/>
    </location>
</feature>
<feature type="short sequence motif" description="Antp-type hexapeptide">
    <location>
        <begin position="98"/>
        <end position="103"/>
    </location>
</feature>
<feature type="compositionally biased region" description="Polar residues" evidence="2">
    <location>
        <begin position="67"/>
        <end position="90"/>
    </location>
</feature>
<feature type="compositionally biased region" description="Polar residues" evidence="2">
    <location>
        <begin position="108"/>
        <end position="121"/>
    </location>
</feature>
<feature type="compositionally biased region" description="Gly residues" evidence="2">
    <location>
        <begin position="197"/>
        <end position="207"/>
    </location>
</feature>
<feature type="compositionally biased region" description="Pro residues" evidence="2">
    <location>
        <begin position="211"/>
        <end position="231"/>
    </location>
</feature>
<feature type="compositionally biased region" description="Low complexity" evidence="2">
    <location>
        <begin position="235"/>
        <end position="251"/>
    </location>
</feature>
<feature type="compositionally biased region" description="Pro residues" evidence="2">
    <location>
        <begin position="299"/>
        <end position="309"/>
    </location>
</feature>
<feature type="compositionally biased region" description="Pro residues" evidence="2">
    <location>
        <begin position="344"/>
        <end position="354"/>
    </location>
</feature>
<dbReference type="EMBL" id="X68045">
    <property type="protein sequence ID" value="CAA48180.1"/>
    <property type="molecule type" value="Genomic_DNA"/>
</dbReference>
<dbReference type="PIR" id="A49127">
    <property type="entry name" value="A49127"/>
</dbReference>
<dbReference type="SMR" id="P50901"/>
<dbReference type="eggNOG" id="KOG0489">
    <property type="taxonomic scope" value="Eukaryota"/>
</dbReference>
<dbReference type="Proteomes" id="UP000001554">
    <property type="component" value="Unplaced"/>
</dbReference>
<dbReference type="GO" id="GO:0005634">
    <property type="term" value="C:nucleus"/>
    <property type="evidence" value="ECO:0000318"/>
    <property type="project" value="GO_Central"/>
</dbReference>
<dbReference type="GO" id="GO:0000981">
    <property type="term" value="F:DNA-binding transcription factor activity, RNA polymerase II-specific"/>
    <property type="evidence" value="ECO:0000318"/>
    <property type="project" value="GO_Central"/>
</dbReference>
<dbReference type="GO" id="GO:0000978">
    <property type="term" value="F:RNA polymerase II cis-regulatory region sequence-specific DNA binding"/>
    <property type="evidence" value="ECO:0000318"/>
    <property type="project" value="GO_Central"/>
</dbReference>
<dbReference type="GO" id="GO:0006357">
    <property type="term" value="P:regulation of transcription by RNA polymerase II"/>
    <property type="evidence" value="ECO:0000318"/>
    <property type="project" value="GO_Central"/>
</dbReference>
<dbReference type="CDD" id="cd00086">
    <property type="entry name" value="homeodomain"/>
    <property type="match status" value="1"/>
</dbReference>
<dbReference type="FunFam" id="1.10.10.60:FF:000504">
    <property type="entry name" value="Transcription factor RFX3"/>
    <property type="match status" value="1"/>
</dbReference>
<dbReference type="Gene3D" id="1.10.10.60">
    <property type="entry name" value="Homeodomain-like"/>
    <property type="match status" value="1"/>
</dbReference>
<dbReference type="InterPro" id="IPR001356">
    <property type="entry name" value="HD"/>
</dbReference>
<dbReference type="InterPro" id="IPR020479">
    <property type="entry name" value="HD_metazoa"/>
</dbReference>
<dbReference type="InterPro" id="IPR001827">
    <property type="entry name" value="Homeobox_Antennapedia_CS"/>
</dbReference>
<dbReference type="InterPro" id="IPR017970">
    <property type="entry name" value="Homeobox_CS"/>
</dbReference>
<dbReference type="InterPro" id="IPR009057">
    <property type="entry name" value="Homeodomain-like_sf"/>
</dbReference>
<dbReference type="PANTHER" id="PTHR45664:SF18">
    <property type="entry name" value="HOMEOBOX PROTEIN HOX3"/>
    <property type="match status" value="1"/>
</dbReference>
<dbReference type="PANTHER" id="PTHR45664">
    <property type="entry name" value="PROTEIN ZERKNUELLT 1-RELATED"/>
    <property type="match status" value="1"/>
</dbReference>
<dbReference type="Pfam" id="PF00046">
    <property type="entry name" value="Homeodomain"/>
    <property type="match status" value="1"/>
</dbReference>
<dbReference type="PRINTS" id="PR00024">
    <property type="entry name" value="HOMEOBOX"/>
</dbReference>
<dbReference type="SMART" id="SM00389">
    <property type="entry name" value="HOX"/>
    <property type="match status" value="1"/>
</dbReference>
<dbReference type="SUPFAM" id="SSF46689">
    <property type="entry name" value="Homeodomain-like"/>
    <property type="match status" value="1"/>
</dbReference>
<dbReference type="PROSITE" id="PS00032">
    <property type="entry name" value="ANTENNAPEDIA"/>
    <property type="match status" value="1"/>
</dbReference>
<dbReference type="PROSITE" id="PS00027">
    <property type="entry name" value="HOMEOBOX_1"/>
    <property type="match status" value="1"/>
</dbReference>
<dbReference type="PROSITE" id="PS50071">
    <property type="entry name" value="HOMEOBOX_2"/>
    <property type="match status" value="1"/>
</dbReference>
<comment type="subcellular location">
    <subcellularLocation>
        <location>Nucleus</location>
    </subcellularLocation>
</comment>
<comment type="developmental stage">
    <text>Localized expression of in the posterior mesoderm (but not in the somites), and region-specific expression in the dorsal nerve cord, of amphioxus neurulae, later embryos and larvae. The anterior limit to expression in the nerve cord is at the level of the four/five somite boundary at the neurula stage, and stabilizes to just anterior to the first nerve cord pigment spot to form.</text>
</comment>
<comment type="similarity">
    <text evidence="3">Belongs to the Antp homeobox family.</text>
</comment>